<reference key="1">
    <citation type="journal article" date="2002" name="J. Bacteriol.">
        <title>Whole-genome comparison of Mycobacterium tuberculosis clinical and laboratory strains.</title>
        <authorList>
            <person name="Fleischmann R.D."/>
            <person name="Alland D."/>
            <person name="Eisen J.A."/>
            <person name="Carpenter L."/>
            <person name="White O."/>
            <person name="Peterson J.D."/>
            <person name="DeBoy R.T."/>
            <person name="Dodson R.J."/>
            <person name="Gwinn M.L."/>
            <person name="Haft D.H."/>
            <person name="Hickey E.K."/>
            <person name="Kolonay J.F."/>
            <person name="Nelson W.C."/>
            <person name="Umayam L.A."/>
            <person name="Ermolaeva M.D."/>
            <person name="Salzberg S.L."/>
            <person name="Delcher A."/>
            <person name="Utterback T.R."/>
            <person name="Weidman J.F."/>
            <person name="Khouri H.M."/>
            <person name="Gill J."/>
            <person name="Mikula A."/>
            <person name="Bishai W."/>
            <person name="Jacobs W.R. Jr."/>
            <person name="Venter J.C."/>
            <person name="Fraser C.M."/>
        </authorList>
    </citation>
    <scope>NUCLEOTIDE SEQUENCE [LARGE SCALE GENOMIC DNA]</scope>
    <source>
        <strain>CDC 1551 / Oshkosh</strain>
    </source>
</reference>
<keyword id="KW-1185">Reference proteome</keyword>
<proteinExistence type="predicted"/>
<protein>
    <recommendedName>
        <fullName>Uncharacterized protein MT1597</fullName>
    </recommendedName>
</protein>
<feature type="chain" id="PRO_0000427417" description="Uncharacterized protein MT1597">
    <location>
        <begin position="1"/>
        <end position="143"/>
    </location>
</feature>
<organism>
    <name type="scientific">Mycobacterium tuberculosis (strain CDC 1551 / Oshkosh)</name>
    <dbReference type="NCBI Taxonomy" id="83331"/>
    <lineage>
        <taxon>Bacteria</taxon>
        <taxon>Bacillati</taxon>
        <taxon>Actinomycetota</taxon>
        <taxon>Actinomycetes</taxon>
        <taxon>Mycobacteriales</taxon>
        <taxon>Mycobacteriaceae</taxon>
        <taxon>Mycobacterium</taxon>
        <taxon>Mycobacterium tuberculosis complex</taxon>
    </lineage>
</organism>
<name>Y1546_MYCTO</name>
<accession>P9WLU6</accession>
<accession>L0T8K8</accession>
<accession>P64873</accession>
<accession>Q10780</accession>
<dbReference type="EMBL" id="AE000516">
    <property type="protein sequence ID" value="AAK45864.1"/>
    <property type="molecule type" value="Genomic_DNA"/>
</dbReference>
<dbReference type="PIR" id="G70761">
    <property type="entry name" value="G70761"/>
</dbReference>
<dbReference type="RefSeq" id="WP_003407748.1">
    <property type="nucleotide sequence ID" value="NZ_KK341227.1"/>
</dbReference>
<dbReference type="SMR" id="P9WLU6"/>
<dbReference type="KEGG" id="mtc:MT1597"/>
<dbReference type="PATRIC" id="fig|83331.31.peg.1718"/>
<dbReference type="HOGENOM" id="CLU_122359_0_0_11"/>
<dbReference type="Proteomes" id="UP000001020">
    <property type="component" value="Chromosome"/>
</dbReference>
<dbReference type="CDD" id="cd07812">
    <property type="entry name" value="SRPBCC"/>
    <property type="match status" value="1"/>
</dbReference>
<dbReference type="Gene3D" id="3.30.530.20">
    <property type="match status" value="1"/>
</dbReference>
<dbReference type="InterPro" id="IPR019587">
    <property type="entry name" value="Polyketide_cyclase/dehydratase"/>
</dbReference>
<dbReference type="InterPro" id="IPR023393">
    <property type="entry name" value="START-like_dom_sf"/>
</dbReference>
<dbReference type="Pfam" id="PF10604">
    <property type="entry name" value="Polyketide_cyc2"/>
    <property type="match status" value="1"/>
</dbReference>
<dbReference type="SUPFAM" id="SSF55961">
    <property type="entry name" value="Bet v1-like"/>
    <property type="match status" value="1"/>
</dbReference>
<gene>
    <name type="ordered locus">MT1597</name>
</gene>
<sequence>MASVELSADVPISPQDTWDHVSELSELGEWLVIHEGWRSELPDQLGEGVQIVGVARAMGMRNRVTWRVTKWDPPHEVAMTGSGKGGTKYGVTLTVRPTKGGSALGLRLELGGRALFGPLGSAAARAVKGDVEKSLKQFAELYG</sequence>